<comment type="function">
    <text evidence="1">Catalyzes the anti-1,4-elimination of the C-3 phosphate and the C-6 proR hydrogen from 5-enolpyruvylshikimate-3-phosphate (EPSP) to yield chorismate, which is the branch point compound that serves as the starting substrate for the three terminal pathways of aromatic amino acid biosynthesis. This reaction introduces a second double bond into the aromatic ring system.</text>
</comment>
<comment type="catalytic activity">
    <reaction evidence="1">
        <text>5-O-(1-carboxyvinyl)-3-phosphoshikimate = chorismate + phosphate</text>
        <dbReference type="Rhea" id="RHEA:21020"/>
        <dbReference type="ChEBI" id="CHEBI:29748"/>
        <dbReference type="ChEBI" id="CHEBI:43474"/>
        <dbReference type="ChEBI" id="CHEBI:57701"/>
        <dbReference type="EC" id="4.2.3.5"/>
    </reaction>
</comment>
<comment type="cofactor">
    <cofactor evidence="1">
        <name>FMNH2</name>
        <dbReference type="ChEBI" id="CHEBI:57618"/>
    </cofactor>
    <text evidence="1">Reduced FMN (FMNH(2)).</text>
</comment>
<comment type="pathway">
    <text evidence="1">Metabolic intermediate biosynthesis; chorismate biosynthesis; chorismate from D-erythrose 4-phosphate and phosphoenolpyruvate: step 7/7.</text>
</comment>
<comment type="subunit">
    <text evidence="1">Homotetramer.</text>
</comment>
<comment type="similarity">
    <text evidence="1">Belongs to the chorismate synthase family.</text>
</comment>
<keyword id="KW-0028">Amino-acid biosynthesis</keyword>
<keyword id="KW-0057">Aromatic amino acid biosynthesis</keyword>
<keyword id="KW-0274">FAD</keyword>
<keyword id="KW-0285">Flavoprotein</keyword>
<keyword id="KW-0288">FMN</keyword>
<keyword id="KW-0456">Lyase</keyword>
<keyword id="KW-0521">NADP</keyword>
<gene>
    <name evidence="1" type="primary">aroC</name>
    <name type="ordered locus">A2cp1_0208</name>
</gene>
<organism>
    <name type="scientific">Anaeromyxobacter dehalogenans (strain 2CP-1 / ATCC BAA-258)</name>
    <dbReference type="NCBI Taxonomy" id="455488"/>
    <lineage>
        <taxon>Bacteria</taxon>
        <taxon>Pseudomonadati</taxon>
        <taxon>Myxococcota</taxon>
        <taxon>Myxococcia</taxon>
        <taxon>Myxococcales</taxon>
        <taxon>Cystobacterineae</taxon>
        <taxon>Anaeromyxobacteraceae</taxon>
        <taxon>Anaeromyxobacter</taxon>
    </lineage>
</organism>
<proteinExistence type="inferred from homology"/>
<protein>
    <recommendedName>
        <fullName evidence="1">Chorismate synthase</fullName>
        <shortName evidence="1">CS</shortName>
        <ecNumber evidence="1">4.2.3.5</ecNumber>
    </recommendedName>
    <alternativeName>
        <fullName evidence="1">5-enolpyruvylshikimate-3-phosphate phospholyase</fullName>
    </alternativeName>
</protein>
<evidence type="ECO:0000255" key="1">
    <source>
        <dbReference type="HAMAP-Rule" id="MF_00300"/>
    </source>
</evidence>
<name>AROC_ANAD2</name>
<dbReference type="EC" id="4.2.3.5" evidence="1"/>
<dbReference type="EMBL" id="CP001359">
    <property type="protein sequence ID" value="ACL63567.1"/>
    <property type="molecule type" value="Genomic_DNA"/>
</dbReference>
<dbReference type="RefSeq" id="WP_012631632.1">
    <property type="nucleotide sequence ID" value="NC_011891.1"/>
</dbReference>
<dbReference type="SMR" id="B8J8W9"/>
<dbReference type="KEGG" id="acp:A2cp1_0208"/>
<dbReference type="HOGENOM" id="CLU_034547_2_0_7"/>
<dbReference type="UniPathway" id="UPA00053">
    <property type="reaction ID" value="UER00090"/>
</dbReference>
<dbReference type="Proteomes" id="UP000007089">
    <property type="component" value="Chromosome"/>
</dbReference>
<dbReference type="GO" id="GO:0005829">
    <property type="term" value="C:cytosol"/>
    <property type="evidence" value="ECO:0007669"/>
    <property type="project" value="TreeGrafter"/>
</dbReference>
<dbReference type="GO" id="GO:0004107">
    <property type="term" value="F:chorismate synthase activity"/>
    <property type="evidence" value="ECO:0007669"/>
    <property type="project" value="UniProtKB-UniRule"/>
</dbReference>
<dbReference type="GO" id="GO:0010181">
    <property type="term" value="F:FMN binding"/>
    <property type="evidence" value="ECO:0007669"/>
    <property type="project" value="TreeGrafter"/>
</dbReference>
<dbReference type="GO" id="GO:0008652">
    <property type="term" value="P:amino acid biosynthetic process"/>
    <property type="evidence" value="ECO:0007669"/>
    <property type="project" value="UniProtKB-KW"/>
</dbReference>
<dbReference type="GO" id="GO:0009073">
    <property type="term" value="P:aromatic amino acid family biosynthetic process"/>
    <property type="evidence" value="ECO:0007669"/>
    <property type="project" value="UniProtKB-KW"/>
</dbReference>
<dbReference type="GO" id="GO:0009423">
    <property type="term" value="P:chorismate biosynthetic process"/>
    <property type="evidence" value="ECO:0007669"/>
    <property type="project" value="UniProtKB-UniRule"/>
</dbReference>
<dbReference type="CDD" id="cd07304">
    <property type="entry name" value="Chorismate_synthase"/>
    <property type="match status" value="1"/>
</dbReference>
<dbReference type="FunFam" id="3.60.150.10:FF:000002">
    <property type="entry name" value="Chorismate synthase"/>
    <property type="match status" value="1"/>
</dbReference>
<dbReference type="Gene3D" id="3.60.150.10">
    <property type="entry name" value="Chorismate synthase AroC"/>
    <property type="match status" value="1"/>
</dbReference>
<dbReference type="HAMAP" id="MF_00300">
    <property type="entry name" value="Chorismate_synth"/>
    <property type="match status" value="1"/>
</dbReference>
<dbReference type="InterPro" id="IPR000453">
    <property type="entry name" value="Chorismate_synth"/>
</dbReference>
<dbReference type="InterPro" id="IPR035904">
    <property type="entry name" value="Chorismate_synth_AroC_sf"/>
</dbReference>
<dbReference type="InterPro" id="IPR020541">
    <property type="entry name" value="Chorismate_synthase_CS"/>
</dbReference>
<dbReference type="NCBIfam" id="TIGR00033">
    <property type="entry name" value="aroC"/>
    <property type="match status" value="1"/>
</dbReference>
<dbReference type="NCBIfam" id="NF003793">
    <property type="entry name" value="PRK05382.1"/>
    <property type="match status" value="1"/>
</dbReference>
<dbReference type="PANTHER" id="PTHR21085">
    <property type="entry name" value="CHORISMATE SYNTHASE"/>
    <property type="match status" value="1"/>
</dbReference>
<dbReference type="PANTHER" id="PTHR21085:SF0">
    <property type="entry name" value="CHORISMATE SYNTHASE"/>
    <property type="match status" value="1"/>
</dbReference>
<dbReference type="Pfam" id="PF01264">
    <property type="entry name" value="Chorismate_synt"/>
    <property type="match status" value="1"/>
</dbReference>
<dbReference type="PIRSF" id="PIRSF001456">
    <property type="entry name" value="Chorismate_synth"/>
    <property type="match status" value="1"/>
</dbReference>
<dbReference type="SUPFAM" id="SSF103263">
    <property type="entry name" value="Chorismate synthase, AroC"/>
    <property type="match status" value="1"/>
</dbReference>
<dbReference type="PROSITE" id="PS00788">
    <property type="entry name" value="CHORISMATE_SYNTHASE_2"/>
    <property type="match status" value="1"/>
</dbReference>
<dbReference type="PROSITE" id="PS00789">
    <property type="entry name" value="CHORISMATE_SYNTHASE_3"/>
    <property type="match status" value="1"/>
</dbReference>
<sequence>MTLRYLTAGESHGPALVAIAEGFPAGLAVDFEAVDRDLRRRQKGYGRGGRMKIETDAAQFLAGLRGGLTTGAPIALAVWNKDHENWKDLVSPYARGGKKFTQVRPGHADLAGALKYGLDDARDVLERASARSTAVTVALGALAKALLSTLGVEVCSRVVAIGPREIRPDAPPTPAQRDAIEASDLHVDDEALAAEWRALIDAEKARGGSIGGAFDVYATGLPIGVGSHVHPDRRLDARLAGALCGVQAIRAVEIGDGTQVGRPGYEFHDAIHHDPARGFWRDTNRAGGLEGGMTDGMPLRVRAYMKPIPTMLHPLATVDLATRAATQARYERSDVCAVPAAAVVGEAVVAWELANALLEKFGGDAVEDVRRAVEAYAARIR</sequence>
<feature type="chain" id="PRO_1000132751" description="Chorismate synthase">
    <location>
        <begin position="1"/>
        <end position="381"/>
    </location>
</feature>
<feature type="binding site" evidence="1">
    <location>
        <position position="41"/>
    </location>
    <ligand>
        <name>NADP(+)</name>
        <dbReference type="ChEBI" id="CHEBI:58349"/>
    </ligand>
</feature>
<feature type="binding site" evidence="1">
    <location>
        <position position="47"/>
    </location>
    <ligand>
        <name>NADP(+)</name>
        <dbReference type="ChEBI" id="CHEBI:58349"/>
    </ligand>
</feature>
<feature type="binding site" evidence="1">
    <location>
        <begin position="127"/>
        <end position="129"/>
    </location>
    <ligand>
        <name>FMN</name>
        <dbReference type="ChEBI" id="CHEBI:58210"/>
    </ligand>
</feature>
<feature type="binding site" evidence="1">
    <location>
        <begin position="247"/>
        <end position="248"/>
    </location>
    <ligand>
        <name>FMN</name>
        <dbReference type="ChEBI" id="CHEBI:58210"/>
    </ligand>
</feature>
<feature type="binding site" evidence="1">
    <location>
        <position position="291"/>
    </location>
    <ligand>
        <name>FMN</name>
        <dbReference type="ChEBI" id="CHEBI:58210"/>
    </ligand>
</feature>
<feature type="binding site" evidence="1">
    <location>
        <begin position="306"/>
        <end position="310"/>
    </location>
    <ligand>
        <name>FMN</name>
        <dbReference type="ChEBI" id="CHEBI:58210"/>
    </ligand>
</feature>
<feature type="binding site" evidence="1">
    <location>
        <position position="332"/>
    </location>
    <ligand>
        <name>FMN</name>
        <dbReference type="ChEBI" id="CHEBI:58210"/>
    </ligand>
</feature>
<accession>B8J8W9</accession>
<reference key="1">
    <citation type="submission" date="2009-01" db="EMBL/GenBank/DDBJ databases">
        <title>Complete sequence of Anaeromyxobacter dehalogenans 2CP-1.</title>
        <authorList>
            <person name="Lucas S."/>
            <person name="Copeland A."/>
            <person name="Lapidus A."/>
            <person name="Glavina del Rio T."/>
            <person name="Dalin E."/>
            <person name="Tice H."/>
            <person name="Bruce D."/>
            <person name="Goodwin L."/>
            <person name="Pitluck S."/>
            <person name="Saunders E."/>
            <person name="Brettin T."/>
            <person name="Detter J.C."/>
            <person name="Han C."/>
            <person name="Larimer F."/>
            <person name="Land M."/>
            <person name="Hauser L."/>
            <person name="Kyrpides N."/>
            <person name="Ovchinnikova G."/>
            <person name="Beliaev A.S."/>
            <person name="Richardson P."/>
        </authorList>
    </citation>
    <scope>NUCLEOTIDE SEQUENCE [LARGE SCALE GENOMIC DNA]</scope>
    <source>
        <strain>2CP-1 / ATCC BAA-258</strain>
    </source>
</reference>